<sequence length="304" mass="33934">MSVDAVGGAVEGAPARLALRVQYLGGHFFGWQWQPGQRTVQQCLEEATERIARHPVRYHAAGRTDTGVHASGQVVHFDTHKKLAPETWVRGLNSLLPDDIAVRAAAYVSDHWHARFTALWREYRYCIHNSTVPDLFVRAQSWYYPYCPLDSEAVAAALATLPGHHDFRAFRRAGSSRPHSLVHVYTAECTREGEQIAIRVRANSFLYGMMRLLIGALAEVGSGRWSVERFAGLWQAGNREQVKYAAPPQGLCLVGVGYPDDPFKTNGIGFARCHTGQEKPEARLGNGDLESREERPPHEMSPLH</sequence>
<accession>Q7MBB9</accession>
<keyword id="KW-0413">Isomerase</keyword>
<keyword id="KW-1185">Reference proteome</keyword>
<keyword id="KW-0819">tRNA processing</keyword>
<protein>
    <recommendedName>
        <fullName evidence="1">tRNA pseudouridine synthase A</fullName>
        <ecNumber evidence="1">5.4.99.12</ecNumber>
    </recommendedName>
    <alternativeName>
        <fullName evidence="1">tRNA pseudouridine(38-40) synthase</fullName>
    </alternativeName>
    <alternativeName>
        <fullName evidence="1">tRNA pseudouridylate synthase I</fullName>
    </alternativeName>
    <alternativeName>
        <fullName evidence="1">tRNA-uridine isomerase I</fullName>
    </alternativeName>
</protein>
<gene>
    <name evidence="1" type="primary">truA</name>
    <name type="ordered locus">gll3569</name>
</gene>
<organism>
    <name type="scientific">Gloeobacter violaceus (strain ATCC 29082 / PCC 7421)</name>
    <dbReference type="NCBI Taxonomy" id="251221"/>
    <lineage>
        <taxon>Bacteria</taxon>
        <taxon>Bacillati</taxon>
        <taxon>Cyanobacteriota</taxon>
        <taxon>Cyanophyceae</taxon>
        <taxon>Gloeobacterales</taxon>
        <taxon>Gloeobacteraceae</taxon>
        <taxon>Gloeobacter</taxon>
    </lineage>
</organism>
<feature type="chain" id="PRO_0000057385" description="tRNA pseudouridine synthase A">
    <location>
        <begin position="1"/>
        <end position="304"/>
    </location>
</feature>
<feature type="region of interest" description="Disordered" evidence="2">
    <location>
        <begin position="274"/>
        <end position="304"/>
    </location>
</feature>
<feature type="compositionally biased region" description="Basic and acidic residues" evidence="2">
    <location>
        <begin position="289"/>
        <end position="298"/>
    </location>
</feature>
<feature type="active site" description="Nucleophile" evidence="1">
    <location>
        <position position="65"/>
    </location>
</feature>
<feature type="binding site" evidence="1">
    <location>
        <position position="123"/>
    </location>
    <ligand>
        <name>substrate</name>
    </ligand>
</feature>
<dbReference type="EC" id="5.4.99.12" evidence="1"/>
<dbReference type="EMBL" id="BA000045">
    <property type="protein sequence ID" value="BAC91510.1"/>
    <property type="molecule type" value="Genomic_DNA"/>
</dbReference>
<dbReference type="RefSeq" id="NP_926515.1">
    <property type="nucleotide sequence ID" value="NC_005125.1"/>
</dbReference>
<dbReference type="RefSeq" id="WP_011143558.1">
    <property type="nucleotide sequence ID" value="NC_005125.1"/>
</dbReference>
<dbReference type="SMR" id="Q7MBB9"/>
<dbReference type="FunCoup" id="Q7MBB9">
    <property type="interactions" value="317"/>
</dbReference>
<dbReference type="STRING" id="251221.gene:10761084"/>
<dbReference type="EnsemblBacteria" id="BAC91510">
    <property type="protein sequence ID" value="BAC91510"/>
    <property type="gene ID" value="BAC91510"/>
</dbReference>
<dbReference type="KEGG" id="gvi:gll3569"/>
<dbReference type="PATRIC" id="fig|251221.4.peg.3602"/>
<dbReference type="eggNOG" id="COG0101">
    <property type="taxonomic scope" value="Bacteria"/>
</dbReference>
<dbReference type="HOGENOM" id="CLU_014673_0_1_3"/>
<dbReference type="InParanoid" id="Q7MBB9"/>
<dbReference type="OrthoDB" id="9811823at2"/>
<dbReference type="PhylomeDB" id="Q7MBB9"/>
<dbReference type="Proteomes" id="UP000000557">
    <property type="component" value="Chromosome"/>
</dbReference>
<dbReference type="GO" id="GO:0009982">
    <property type="term" value="F:pseudouridine synthase activity"/>
    <property type="evidence" value="ECO:0000318"/>
    <property type="project" value="GO_Central"/>
</dbReference>
<dbReference type="GO" id="GO:0003723">
    <property type="term" value="F:RNA binding"/>
    <property type="evidence" value="ECO:0007669"/>
    <property type="project" value="InterPro"/>
</dbReference>
<dbReference type="GO" id="GO:0160147">
    <property type="term" value="F:tRNA pseudouridine(38-40) synthase activity"/>
    <property type="evidence" value="ECO:0007669"/>
    <property type="project" value="UniProtKB-EC"/>
</dbReference>
<dbReference type="GO" id="GO:0031119">
    <property type="term" value="P:tRNA pseudouridine synthesis"/>
    <property type="evidence" value="ECO:0000318"/>
    <property type="project" value="GO_Central"/>
</dbReference>
<dbReference type="CDD" id="cd02570">
    <property type="entry name" value="PseudoU_synth_EcTruA"/>
    <property type="match status" value="1"/>
</dbReference>
<dbReference type="FunFam" id="3.30.70.580:FF:000001">
    <property type="entry name" value="tRNA pseudouridine synthase A"/>
    <property type="match status" value="1"/>
</dbReference>
<dbReference type="Gene3D" id="3.30.70.660">
    <property type="entry name" value="Pseudouridine synthase I, catalytic domain, C-terminal subdomain"/>
    <property type="match status" value="1"/>
</dbReference>
<dbReference type="Gene3D" id="3.30.70.580">
    <property type="entry name" value="Pseudouridine synthase I, catalytic domain, N-terminal subdomain"/>
    <property type="match status" value="1"/>
</dbReference>
<dbReference type="HAMAP" id="MF_00171">
    <property type="entry name" value="TruA"/>
    <property type="match status" value="1"/>
</dbReference>
<dbReference type="InterPro" id="IPR020103">
    <property type="entry name" value="PsdUridine_synth_cat_dom_sf"/>
</dbReference>
<dbReference type="InterPro" id="IPR001406">
    <property type="entry name" value="PsdUridine_synth_TruA"/>
</dbReference>
<dbReference type="InterPro" id="IPR020097">
    <property type="entry name" value="PsdUridine_synth_TruA_a/b_dom"/>
</dbReference>
<dbReference type="InterPro" id="IPR020095">
    <property type="entry name" value="PsdUridine_synth_TruA_C"/>
</dbReference>
<dbReference type="InterPro" id="IPR020094">
    <property type="entry name" value="TruA/RsuA/RluB/E/F_N"/>
</dbReference>
<dbReference type="NCBIfam" id="TIGR00071">
    <property type="entry name" value="hisT_truA"/>
    <property type="match status" value="1"/>
</dbReference>
<dbReference type="PANTHER" id="PTHR11142">
    <property type="entry name" value="PSEUDOURIDYLATE SYNTHASE"/>
    <property type="match status" value="1"/>
</dbReference>
<dbReference type="PANTHER" id="PTHR11142:SF0">
    <property type="entry name" value="TRNA PSEUDOURIDINE SYNTHASE-LIKE 1"/>
    <property type="match status" value="1"/>
</dbReference>
<dbReference type="Pfam" id="PF01416">
    <property type="entry name" value="PseudoU_synth_1"/>
    <property type="match status" value="2"/>
</dbReference>
<dbReference type="PIRSF" id="PIRSF001430">
    <property type="entry name" value="tRNA_psdUrid_synth"/>
    <property type="match status" value="1"/>
</dbReference>
<dbReference type="SUPFAM" id="SSF55120">
    <property type="entry name" value="Pseudouridine synthase"/>
    <property type="match status" value="1"/>
</dbReference>
<proteinExistence type="inferred from homology"/>
<name>TRUA_GLOVI</name>
<reference key="1">
    <citation type="journal article" date="2003" name="DNA Res.">
        <title>Complete genome structure of Gloeobacter violaceus PCC 7421, a cyanobacterium that lacks thylakoids.</title>
        <authorList>
            <person name="Nakamura Y."/>
            <person name="Kaneko T."/>
            <person name="Sato S."/>
            <person name="Mimuro M."/>
            <person name="Miyashita H."/>
            <person name="Tsuchiya T."/>
            <person name="Sasamoto S."/>
            <person name="Watanabe A."/>
            <person name="Kawashima K."/>
            <person name="Kishida Y."/>
            <person name="Kiyokawa C."/>
            <person name="Kohara M."/>
            <person name="Matsumoto M."/>
            <person name="Matsuno A."/>
            <person name="Nakazaki N."/>
            <person name="Shimpo S."/>
            <person name="Takeuchi C."/>
            <person name="Yamada M."/>
            <person name="Tabata S."/>
        </authorList>
    </citation>
    <scope>NUCLEOTIDE SEQUENCE [LARGE SCALE GENOMIC DNA]</scope>
    <source>
        <strain>ATCC 29082 / PCC 7421</strain>
    </source>
</reference>
<comment type="function">
    <text evidence="1">Formation of pseudouridine at positions 38, 39 and 40 in the anticodon stem and loop of transfer RNAs.</text>
</comment>
<comment type="catalytic activity">
    <reaction evidence="1">
        <text>uridine(38/39/40) in tRNA = pseudouridine(38/39/40) in tRNA</text>
        <dbReference type="Rhea" id="RHEA:22376"/>
        <dbReference type="Rhea" id="RHEA-COMP:10085"/>
        <dbReference type="Rhea" id="RHEA-COMP:10087"/>
        <dbReference type="ChEBI" id="CHEBI:65314"/>
        <dbReference type="ChEBI" id="CHEBI:65315"/>
        <dbReference type="EC" id="5.4.99.12"/>
    </reaction>
</comment>
<comment type="subunit">
    <text evidence="1">Homodimer.</text>
</comment>
<comment type="similarity">
    <text evidence="1">Belongs to the tRNA pseudouridine synthase TruA family.</text>
</comment>
<evidence type="ECO:0000255" key="1">
    <source>
        <dbReference type="HAMAP-Rule" id="MF_00171"/>
    </source>
</evidence>
<evidence type="ECO:0000256" key="2">
    <source>
        <dbReference type="SAM" id="MobiDB-lite"/>
    </source>
</evidence>